<sequence length="482" mass="53902">MSLSVNEGVDVKGLVDKVLEAYPEKSRRRRAKHLNVLEAEAKDCGVKSNIKSIPGVMTIRGCAYAGSKGVVWGPIKDMIHISHGPVGCGYYSWSGRRNYYVGDTGVDKLGTMHFTSDFQEKDIVFGGDKKLHKVIEEINELFPLVNGISIQSECPIGLNGDDIEGVSKAKSEELGKPVVPVRCEGFRGVSQSLGHHIANDVIRDWILPKKTEPKEGFVSTPYDVTIIGDYNIGGDAWASRILLEEIGLRVIAQWSGDGTLAELENQPKAKVNLIHSYRSMNYIARHMEEKFGIPWMEYNFFGPSQIAESLRKIAALFDDTIKENAEKVIAKYQPMVDAVVGDAALRAHGTKGRVPLKPLGPRHRPIVDAYHDLGMEIVGTGYEFAHNDDYQRTQHYVKEGTLIYDDVTAFELEKFVELMRPDLVASGIKEKYVFQKMGLPFRQMHSWDYSGPYHGYDGFAIFARDMDLAINNPVWGIMKAPF</sequence>
<reference key="1">
    <citation type="journal article" date="1991" name="Braz. J. Med. Biol. Res.">
        <title>The nifHDK operon in the free-living nitrogen-fixing bacteria Azospirillum brasilense sequentially comprises genes H, D, K, an 353 bp orf and gene Y.</title>
        <authorList>
            <person name="Passaglia L.M.P."/>
            <person name="Nunes C.P."/>
            <person name="Zaha A."/>
            <person name="Schrank I.S."/>
        </authorList>
    </citation>
    <scope>NUCLEOTIDE SEQUENCE [GENOMIC DNA]</scope>
</reference>
<reference key="2">
    <citation type="journal article" date="1989" name="Mol. Gen. Genet.">
        <title>Regulation of transcription and promoter mapping of the structural genes for nitrogenase (nifHDK) of Azospirillum brasilense Sp7.</title>
        <authorList>
            <person name="de Zamaroczy M."/>
            <person name="Delorme F."/>
            <person name="Elmerich C."/>
        </authorList>
    </citation>
    <scope>NUCLEOTIDE SEQUENCE [GENOMIC DNA] OF 1-28</scope>
    <source>
        <strain>ATCC 29145 / DSM 1690 / IMET 11303 / Sp7</strain>
    </source>
</reference>
<keyword id="KW-0067">ATP-binding</keyword>
<keyword id="KW-0408">Iron</keyword>
<keyword id="KW-0411">Iron-sulfur</keyword>
<keyword id="KW-0479">Metal-binding</keyword>
<keyword id="KW-0500">Molybdenum</keyword>
<keyword id="KW-0535">Nitrogen fixation</keyword>
<keyword id="KW-0547">Nucleotide-binding</keyword>
<keyword id="KW-0560">Oxidoreductase</keyword>
<feature type="chain" id="PRO_0000153054" description="Nitrogenase molybdenum-iron protein alpha chain">
    <location>
        <begin position="1"/>
        <end position="482"/>
    </location>
</feature>
<feature type="binding site" evidence="1">
    <location>
        <position position="62"/>
    </location>
    <ligand>
        <name>[8Fe-7S] cluster</name>
        <dbReference type="ChEBI" id="CHEBI:21143"/>
        <note>ligand shared with beta chain</note>
    </ligand>
</feature>
<feature type="binding site" evidence="1">
    <location>
        <position position="88"/>
    </location>
    <ligand>
        <name>[8Fe-7S] cluster</name>
        <dbReference type="ChEBI" id="CHEBI:21143"/>
        <note>ligand shared with beta chain</note>
    </ligand>
</feature>
<feature type="binding site" evidence="1">
    <location>
        <position position="154"/>
    </location>
    <ligand>
        <name>[8Fe-7S] cluster</name>
        <dbReference type="ChEBI" id="CHEBI:21143"/>
        <note>ligand shared with beta chain</note>
    </ligand>
</feature>
<feature type="binding site" evidence="1">
    <location>
        <position position="445"/>
    </location>
    <ligand>
        <name>[7Fe-Mo-9S-C-homocitryl] cluster</name>
        <dbReference type="ChEBI" id="CHEBI:30409"/>
    </ligand>
</feature>
<evidence type="ECO:0000250" key="1"/>
<evidence type="ECO:0000305" key="2"/>
<gene>
    <name type="primary">nifD</name>
</gene>
<organism>
    <name type="scientific">Azospirillum brasilense</name>
    <dbReference type="NCBI Taxonomy" id="192"/>
    <lineage>
        <taxon>Bacteria</taxon>
        <taxon>Pseudomonadati</taxon>
        <taxon>Pseudomonadota</taxon>
        <taxon>Alphaproteobacteria</taxon>
        <taxon>Rhodospirillales</taxon>
        <taxon>Azospirillaceae</taxon>
        <taxon>Azospirillum</taxon>
    </lineage>
</organism>
<name>NIFD_AZOBR</name>
<accession>P25313</accession>
<comment type="function">
    <text>This molybdenum-iron protein is part of the nitrogenase complex that catalyzes the key enzymatic reactions in nitrogen fixation.</text>
</comment>
<comment type="catalytic activity">
    <reaction>
        <text>N2 + 8 reduced [2Fe-2S]-[ferredoxin] + 16 ATP + 16 H2O = H2 + 8 oxidized [2Fe-2S]-[ferredoxin] + 2 NH4(+) + 16 ADP + 16 phosphate + 6 H(+)</text>
        <dbReference type="Rhea" id="RHEA:21448"/>
        <dbReference type="Rhea" id="RHEA-COMP:10000"/>
        <dbReference type="Rhea" id="RHEA-COMP:10001"/>
        <dbReference type="ChEBI" id="CHEBI:15377"/>
        <dbReference type="ChEBI" id="CHEBI:15378"/>
        <dbReference type="ChEBI" id="CHEBI:17997"/>
        <dbReference type="ChEBI" id="CHEBI:18276"/>
        <dbReference type="ChEBI" id="CHEBI:28938"/>
        <dbReference type="ChEBI" id="CHEBI:30616"/>
        <dbReference type="ChEBI" id="CHEBI:33737"/>
        <dbReference type="ChEBI" id="CHEBI:33738"/>
        <dbReference type="ChEBI" id="CHEBI:43474"/>
        <dbReference type="ChEBI" id="CHEBI:456216"/>
        <dbReference type="EC" id="1.18.6.1"/>
    </reaction>
</comment>
<comment type="cofactor">
    <cofactor evidence="1">
        <name>[8Fe-7S] cluster</name>
        <dbReference type="ChEBI" id="CHEBI:21143"/>
    </cofactor>
    <text evidence="1">Binds 1 [8Fe-7S] cluster per heterodimer.</text>
</comment>
<comment type="cofactor">
    <cofactor evidence="1">
        <name>[7Fe-Mo-9S-C-homocitryl] cluster</name>
        <dbReference type="ChEBI" id="CHEBI:30409"/>
    </cofactor>
    <text evidence="1">Binds 1 [7Fe-Mo-9S-C-homocitryl] cluster per subunit.</text>
</comment>
<comment type="subunit">
    <text>Tetramer of two alpha and two beta chains. Forms complex with the iron protein (nitrogenase component 2).</text>
</comment>
<comment type="similarity">
    <text evidence="2">Belongs to the NifD/NifK/NifE/NifN family.</text>
</comment>
<protein>
    <recommendedName>
        <fullName>Nitrogenase molybdenum-iron protein alpha chain</fullName>
        <ecNumber>1.18.6.1</ecNumber>
    </recommendedName>
    <alternativeName>
        <fullName>Dinitrogenase</fullName>
    </alternativeName>
    <alternativeName>
        <fullName>Nitrogenase component I</fullName>
    </alternativeName>
</protein>
<proteinExistence type="inferred from homology"/>
<dbReference type="EC" id="1.18.6.1"/>
<dbReference type="EMBL" id="M64344">
    <property type="protein sequence ID" value="AAB02343.1"/>
    <property type="molecule type" value="Genomic_DNA"/>
</dbReference>
<dbReference type="EMBL" id="X51500">
    <property type="protein sequence ID" value="CAA35869.2"/>
    <property type="molecule type" value="Genomic_DNA"/>
</dbReference>
<dbReference type="PIR" id="S27474">
    <property type="entry name" value="S15748"/>
</dbReference>
<dbReference type="SMR" id="P25313"/>
<dbReference type="GO" id="GO:0016612">
    <property type="term" value="C:molybdenum-iron nitrogenase complex"/>
    <property type="evidence" value="ECO:0007669"/>
    <property type="project" value="InterPro"/>
</dbReference>
<dbReference type="GO" id="GO:0005524">
    <property type="term" value="F:ATP binding"/>
    <property type="evidence" value="ECO:0007669"/>
    <property type="project" value="UniProtKB-KW"/>
</dbReference>
<dbReference type="GO" id="GO:0051536">
    <property type="term" value="F:iron-sulfur cluster binding"/>
    <property type="evidence" value="ECO:0007669"/>
    <property type="project" value="UniProtKB-KW"/>
</dbReference>
<dbReference type="GO" id="GO:0046872">
    <property type="term" value="F:metal ion binding"/>
    <property type="evidence" value="ECO:0007669"/>
    <property type="project" value="UniProtKB-KW"/>
</dbReference>
<dbReference type="GO" id="GO:0016163">
    <property type="term" value="F:nitrogenase activity"/>
    <property type="evidence" value="ECO:0007669"/>
    <property type="project" value="UniProtKB-EC"/>
</dbReference>
<dbReference type="GO" id="GO:0009399">
    <property type="term" value="P:nitrogen fixation"/>
    <property type="evidence" value="ECO:0007669"/>
    <property type="project" value="UniProtKB-KW"/>
</dbReference>
<dbReference type="CDD" id="cd01976">
    <property type="entry name" value="Nitrogenase_MoFe_alpha"/>
    <property type="match status" value="1"/>
</dbReference>
<dbReference type="Gene3D" id="3.40.50.1980">
    <property type="entry name" value="Nitrogenase molybdenum iron protein domain"/>
    <property type="match status" value="3"/>
</dbReference>
<dbReference type="InterPro" id="IPR000510">
    <property type="entry name" value="Nase/OxRdtase_comp1"/>
</dbReference>
<dbReference type="InterPro" id="IPR010143">
    <property type="entry name" value="Nase_comp1_asu"/>
</dbReference>
<dbReference type="InterPro" id="IPR000318">
    <property type="entry name" value="Nase_comp1_CS"/>
</dbReference>
<dbReference type="InterPro" id="IPR005972">
    <property type="entry name" value="Nase_Mo-Fe_asu"/>
</dbReference>
<dbReference type="NCBIfam" id="TIGR01862">
    <property type="entry name" value="N2-ase-Ialpha"/>
    <property type="match status" value="1"/>
</dbReference>
<dbReference type="NCBIfam" id="TIGR01282">
    <property type="entry name" value="nifD"/>
    <property type="match status" value="1"/>
</dbReference>
<dbReference type="PANTHER" id="PTHR43457">
    <property type="entry name" value="NITROGENASE MOLYBDENUM-IRON PROTEIN ALPHA CHAIN"/>
    <property type="match status" value="1"/>
</dbReference>
<dbReference type="PANTHER" id="PTHR43457:SF1">
    <property type="entry name" value="NITROGENASE MOLYBDENUM-IRON PROTEIN ALPHA CHAIN"/>
    <property type="match status" value="1"/>
</dbReference>
<dbReference type="Pfam" id="PF00148">
    <property type="entry name" value="Oxidored_nitro"/>
    <property type="match status" value="1"/>
</dbReference>
<dbReference type="SUPFAM" id="SSF53807">
    <property type="entry name" value="Helical backbone' metal receptor"/>
    <property type="match status" value="1"/>
</dbReference>
<dbReference type="PROSITE" id="PS00699">
    <property type="entry name" value="NITROGENASE_1_1"/>
    <property type="match status" value="1"/>
</dbReference>
<dbReference type="PROSITE" id="PS00090">
    <property type="entry name" value="NITROGENASE_1_2"/>
    <property type="match status" value="1"/>
</dbReference>